<sequence>METHKHGPSLAWWSLLLLLLGLLMPPAIAQDLTYREAVLRAVDAFNQQSSEANLYRLLSMDPQQLEDAKPYTPQPVSFTVKETECPRTTWKLPEQCDFKEDGLVKRCVGTVTRYQAWDSFDIRCNRAQESPEPTGLRKRLRKFRNKIKEKLKKIGQKIQGFVPKLAPRTDY</sequence>
<protein>
    <recommendedName>
        <fullName>Antimicrobial protein CAP18</fullName>
    </recommendedName>
    <alternativeName>
        <fullName>18 kDa cationic protein</fullName>
    </alternativeName>
    <alternativeName>
        <fullName>18 kDa lipopolysaccharide-binding protein</fullName>
    </alternativeName>
    <alternativeName>
        <fullName>CAP18-A</fullName>
    </alternativeName>
    <component>
        <recommendedName>
            <fullName>Antimicrobial protein CAP7</fullName>
        </recommendedName>
    </component>
</protein>
<gene>
    <name type="primary">CAP18</name>
</gene>
<accession>P25230</accession>
<proteinExistence type="evidence at protein level"/>
<organism>
    <name type="scientific">Oryctolagus cuniculus</name>
    <name type="common">Rabbit</name>
    <dbReference type="NCBI Taxonomy" id="9986"/>
    <lineage>
        <taxon>Eukaryota</taxon>
        <taxon>Metazoa</taxon>
        <taxon>Chordata</taxon>
        <taxon>Craniata</taxon>
        <taxon>Vertebrata</taxon>
        <taxon>Euteleostomi</taxon>
        <taxon>Mammalia</taxon>
        <taxon>Eutheria</taxon>
        <taxon>Euarchontoglires</taxon>
        <taxon>Glires</taxon>
        <taxon>Lagomorpha</taxon>
        <taxon>Leporidae</taxon>
        <taxon>Oryctolagus</taxon>
    </lineage>
</organism>
<keyword id="KW-0002">3D-structure</keyword>
<keyword id="KW-0044">Antibiotic</keyword>
<keyword id="KW-0929">Antimicrobial</keyword>
<keyword id="KW-0903">Direct protein sequencing</keyword>
<keyword id="KW-1015">Disulfide bond</keyword>
<keyword id="KW-1185">Reference proteome</keyword>
<keyword id="KW-0964">Secreted</keyword>
<keyword id="KW-0732">Signal</keyword>
<comment type="function">
    <text>CAP18 binds to the lipid A moiety of bacterial lipopolysaccharides (LPS), a glycolipid present in the outer membrane of all Gram-negative bacteria. Has antibiotic activity.</text>
</comment>
<comment type="subcellular location">
    <subcellularLocation>
        <location>Secreted</location>
    </subcellularLocation>
</comment>
<comment type="tissue specificity">
    <text>Neutrophils.</text>
</comment>
<comment type="similarity">
    <text evidence="3">Belongs to the cathelicidin family.</text>
</comment>
<feature type="signal peptide" evidence="2">
    <location>
        <begin position="1"/>
        <end position="29"/>
    </location>
</feature>
<feature type="chain" id="PRO_0000004754" description="Antimicrobial protein CAP18">
    <location>
        <begin position="30"/>
        <end position="171"/>
    </location>
</feature>
<feature type="chain" id="PRO_0000004755" description="Antimicrobial protein CAP7">
    <location>
        <begin position="135"/>
        <end position="171"/>
    </location>
</feature>
<feature type="disulfide bond" evidence="1">
    <location>
        <begin position="85"/>
        <end position="96"/>
    </location>
</feature>
<feature type="disulfide bond" evidence="1">
    <location>
        <begin position="107"/>
        <end position="124"/>
    </location>
</feature>
<feature type="sequence variant">
    <original>K</original>
    <variation>D</variation>
    <location>
        <position position="157"/>
    </location>
</feature>
<feature type="helix" evidence="4">
    <location>
        <begin position="136"/>
        <end position="165"/>
    </location>
</feature>
<evidence type="ECO:0000250" key="1"/>
<evidence type="ECO:0000255" key="2"/>
<evidence type="ECO:0000305" key="3"/>
<evidence type="ECO:0007829" key="4">
    <source>
        <dbReference type="PDB" id="1LYP"/>
    </source>
</evidence>
<reference key="1">
    <citation type="journal article" date="1991" name="Biochem. Biophys. Res. Commun.">
        <title>Complementary DNA sequence of rabbit CAP18 -- a unique lipopolysaccharide binding protein.</title>
        <authorList>
            <person name="Larrick J.W."/>
            <person name="Morgan J.G."/>
            <person name="Palings I."/>
            <person name="Hirata M."/>
            <person name="Yen M.H."/>
        </authorList>
    </citation>
    <scope>NUCLEOTIDE SEQUENCE [MRNA]</scope>
    <scope>PROTEIN SEQUENCE OF 135-159</scope>
    <source>
        <tissue>Bone marrow</tissue>
    </source>
</reference>
<reference key="2">
    <citation type="journal article" date="1994" name="Infect. Immun.">
        <title>Characterization of a rabbit cationic protein (CAP18) with lipopolysaccharide-inhibitory activity.</title>
        <authorList>
            <person name="Hirata M."/>
            <person name="Shimomura Y."/>
            <person name="Yoshida M."/>
            <person name="Morgan J.G."/>
            <person name="Palings I."/>
            <person name="Wilson D."/>
            <person name="Yen M.H."/>
            <person name="Wright S.C."/>
            <person name="Larrick J.W."/>
        </authorList>
    </citation>
    <scope>PROTEIN SEQUENCE OF 135-159</scope>
    <scope>CHARACTERIZATION</scope>
</reference>
<reference key="3">
    <citation type="journal article" date="1994" name="J. Immunol.">
        <title>A novel granulocyte-derived peptide with lipopolysaccharide-neutralizing activity.</title>
        <authorList>
            <person name="Larrick J.W."/>
            <person name="Hirata M."/>
            <person name="Zheng H."/>
            <person name="Zhong J."/>
            <person name="Bolin D."/>
            <person name="Cavaillon J.-M."/>
            <person name="Warren H.S."/>
            <person name="Wright S.C."/>
        </authorList>
    </citation>
    <scope>PROTEIN SEQUENCE OF 135-154</scope>
    <scope>CHARACTERIZATION</scope>
</reference>
<reference key="4">
    <citation type="journal article" date="1994" name="FEBS Lett.">
        <title>Identification and characterization of a primary antibacterial domain in CAP18, a lipopolysaccharide binding protein from rabbit leukocytes.</title>
        <authorList>
            <person name="Tossi A."/>
            <person name="Scocchi M."/>
            <person name="Skerlavaj B."/>
            <person name="Gennaro R."/>
        </authorList>
    </citation>
    <scope>CHARACTERIZATION</scope>
</reference>
<reference key="5">
    <citation type="journal article" date="1995" name="FEBS Lett.">
        <title>The solution structure of the active domain of CAP18 -- a lipopolysaccharide binding protein from rabbit leukocytes.</title>
        <authorList>
            <person name="Chen C."/>
            <person name="Brock R."/>
            <person name="Luh F."/>
            <person name="Chou P.-J."/>
            <person name="Larrick J.W."/>
            <person name="Huang R.-F."/>
            <person name="Huang T.-H."/>
        </authorList>
    </citation>
    <scope>STRUCTURE BY NMR OF 135-166</scope>
</reference>
<name>CAP18_RABIT</name>
<dbReference type="EMBL" id="M73998">
    <property type="protein sequence ID" value="AAA31187.1"/>
    <property type="molecule type" value="mRNA"/>
</dbReference>
<dbReference type="PIR" id="JQ1171">
    <property type="entry name" value="JQ1171"/>
</dbReference>
<dbReference type="RefSeq" id="NP_001075774.1">
    <property type="nucleotide sequence ID" value="NM_001082305.1"/>
</dbReference>
<dbReference type="PDB" id="1LYP">
    <property type="method" value="NMR"/>
    <property type="chains" value="A=135-166"/>
</dbReference>
<dbReference type="PDBsum" id="1LYP"/>
<dbReference type="SMR" id="P25230"/>
<dbReference type="FunCoup" id="P25230">
    <property type="interactions" value="14"/>
</dbReference>
<dbReference type="STRING" id="9986.ENSOCUP00000013325"/>
<dbReference type="TCDB" id="1.C.33.1.6">
    <property type="family name" value="the cathelicidin (cathelicidin) family"/>
</dbReference>
<dbReference type="PaxDb" id="9986-ENSOCUP00000013325"/>
<dbReference type="GeneID" id="100009142"/>
<dbReference type="KEGG" id="ocu:100009142"/>
<dbReference type="CTD" id="820"/>
<dbReference type="eggNOG" id="ENOG502SAES">
    <property type="taxonomic scope" value="Eukaryota"/>
</dbReference>
<dbReference type="InParanoid" id="P25230"/>
<dbReference type="OrthoDB" id="9930485at2759"/>
<dbReference type="Proteomes" id="UP000001811">
    <property type="component" value="Unplaced"/>
</dbReference>
<dbReference type="GO" id="GO:0005615">
    <property type="term" value="C:extracellular space"/>
    <property type="evidence" value="ECO:0007669"/>
    <property type="project" value="TreeGrafter"/>
</dbReference>
<dbReference type="GO" id="GO:0001530">
    <property type="term" value="F:lipopolysaccharide binding"/>
    <property type="evidence" value="ECO:0007669"/>
    <property type="project" value="TreeGrafter"/>
</dbReference>
<dbReference type="GO" id="GO:0061844">
    <property type="term" value="P:antimicrobial humoral immune response mediated by antimicrobial peptide"/>
    <property type="evidence" value="ECO:0007669"/>
    <property type="project" value="TreeGrafter"/>
</dbReference>
<dbReference type="GO" id="GO:0050829">
    <property type="term" value="P:defense response to Gram-negative bacterium"/>
    <property type="evidence" value="ECO:0007669"/>
    <property type="project" value="TreeGrafter"/>
</dbReference>
<dbReference type="GO" id="GO:0050830">
    <property type="term" value="P:defense response to Gram-positive bacterium"/>
    <property type="evidence" value="ECO:0007669"/>
    <property type="project" value="TreeGrafter"/>
</dbReference>
<dbReference type="GO" id="GO:0045087">
    <property type="term" value="P:innate immune response"/>
    <property type="evidence" value="ECO:0007669"/>
    <property type="project" value="TreeGrafter"/>
</dbReference>
<dbReference type="FunFam" id="3.10.450.10:FF:000003">
    <property type="entry name" value="Cathelicidin antimicrobial peptide"/>
    <property type="match status" value="1"/>
</dbReference>
<dbReference type="Gene3D" id="3.10.450.10">
    <property type="match status" value="1"/>
</dbReference>
<dbReference type="InterPro" id="IPR001894">
    <property type="entry name" value="Cathelicidin-like"/>
</dbReference>
<dbReference type="InterPro" id="IPR018216">
    <property type="entry name" value="Cathelicidin_CS"/>
</dbReference>
<dbReference type="InterPro" id="IPR022746">
    <property type="entry name" value="Cathlecidin_C"/>
</dbReference>
<dbReference type="InterPro" id="IPR046350">
    <property type="entry name" value="Cystatin_sf"/>
</dbReference>
<dbReference type="PANTHER" id="PTHR10206">
    <property type="entry name" value="CATHELICIDIN"/>
    <property type="match status" value="1"/>
</dbReference>
<dbReference type="PANTHER" id="PTHR10206:SF2">
    <property type="entry name" value="CATHELICIDIN ANTIMICROBIAL PEPTIDE"/>
    <property type="match status" value="1"/>
</dbReference>
<dbReference type="Pfam" id="PF12153">
    <property type="entry name" value="CAP18_C"/>
    <property type="match status" value="1"/>
</dbReference>
<dbReference type="Pfam" id="PF00666">
    <property type="entry name" value="Cathelicidins"/>
    <property type="match status" value="1"/>
</dbReference>
<dbReference type="SUPFAM" id="SSF54403">
    <property type="entry name" value="Cystatin/monellin"/>
    <property type="match status" value="1"/>
</dbReference>
<dbReference type="PROSITE" id="PS00946">
    <property type="entry name" value="CATHELICIDINS_1"/>
    <property type="match status" value="1"/>
</dbReference>
<dbReference type="PROSITE" id="PS00947">
    <property type="entry name" value="CATHELICIDINS_2"/>
    <property type="match status" value="1"/>
</dbReference>